<accession>Q98NP4</accession>
<keyword id="KW-0004">4Fe-4S</keyword>
<keyword id="KW-0067">ATP-binding</keyword>
<keyword id="KW-0963">Cytoplasm</keyword>
<keyword id="KW-0408">Iron</keyword>
<keyword id="KW-0411">Iron-sulfur</keyword>
<keyword id="KW-0460">Magnesium</keyword>
<keyword id="KW-0479">Metal-binding</keyword>
<keyword id="KW-0547">Nucleotide-binding</keyword>
<keyword id="KW-0694">RNA-binding</keyword>
<keyword id="KW-0808">Transferase</keyword>
<keyword id="KW-0819">tRNA processing</keyword>
<keyword id="KW-0820">tRNA-binding</keyword>
<proteinExistence type="inferred from homology"/>
<name>TTCA_RHILO</name>
<feature type="chain" id="PRO_0000348816" description="tRNA-cytidine(32) 2-sulfurtransferase">
    <location>
        <begin position="1"/>
        <end position="295"/>
    </location>
</feature>
<feature type="short sequence motif" description="PP-loop motif" evidence="1">
    <location>
        <begin position="63"/>
        <end position="68"/>
    </location>
</feature>
<feature type="binding site" evidence="1">
    <location>
        <position position="138"/>
    </location>
    <ligand>
        <name>[4Fe-4S] cluster</name>
        <dbReference type="ChEBI" id="CHEBI:49883"/>
    </ligand>
</feature>
<feature type="binding site" evidence="1">
    <location>
        <position position="141"/>
    </location>
    <ligand>
        <name>[4Fe-4S] cluster</name>
        <dbReference type="ChEBI" id="CHEBI:49883"/>
    </ligand>
</feature>
<feature type="binding site" evidence="1">
    <location>
        <position position="229"/>
    </location>
    <ligand>
        <name>[4Fe-4S] cluster</name>
        <dbReference type="ChEBI" id="CHEBI:49883"/>
    </ligand>
</feature>
<organism>
    <name type="scientific">Mesorhizobium japonicum (strain LMG 29417 / CECT 9101 / MAFF 303099)</name>
    <name type="common">Mesorhizobium loti (strain MAFF 303099)</name>
    <dbReference type="NCBI Taxonomy" id="266835"/>
    <lineage>
        <taxon>Bacteria</taxon>
        <taxon>Pseudomonadati</taxon>
        <taxon>Pseudomonadota</taxon>
        <taxon>Alphaproteobacteria</taxon>
        <taxon>Hyphomicrobiales</taxon>
        <taxon>Phyllobacteriaceae</taxon>
        <taxon>Mesorhizobium</taxon>
    </lineage>
</organism>
<reference key="1">
    <citation type="journal article" date="2000" name="DNA Res.">
        <title>Complete genome structure of the nitrogen-fixing symbiotic bacterium Mesorhizobium loti.</title>
        <authorList>
            <person name="Kaneko T."/>
            <person name="Nakamura Y."/>
            <person name="Sato S."/>
            <person name="Asamizu E."/>
            <person name="Kato T."/>
            <person name="Sasamoto S."/>
            <person name="Watanabe A."/>
            <person name="Idesawa K."/>
            <person name="Ishikawa A."/>
            <person name="Kawashima K."/>
            <person name="Kimura T."/>
            <person name="Kishida Y."/>
            <person name="Kiyokawa C."/>
            <person name="Kohara M."/>
            <person name="Matsumoto M."/>
            <person name="Matsuno A."/>
            <person name="Mochizuki Y."/>
            <person name="Nakayama S."/>
            <person name="Nakazaki N."/>
            <person name="Shimpo S."/>
            <person name="Sugimoto M."/>
            <person name="Takeuchi C."/>
            <person name="Yamada M."/>
            <person name="Tabata S."/>
        </authorList>
    </citation>
    <scope>NUCLEOTIDE SEQUENCE [LARGE SCALE GENOMIC DNA]</scope>
    <source>
        <strain>LMG 29417 / CECT 9101 / MAFF 303099</strain>
    </source>
</reference>
<comment type="function">
    <text evidence="1">Catalyzes the ATP-dependent 2-thiolation of cytidine in position 32 of tRNA, to form 2-thiocytidine (s(2)C32). The sulfur atoms are provided by the cysteine/cysteine desulfurase (IscS) system.</text>
</comment>
<comment type="catalytic activity">
    <reaction evidence="1">
        <text>cytidine(32) in tRNA + S-sulfanyl-L-cysteinyl-[cysteine desulfurase] + AH2 + ATP = 2-thiocytidine(32) in tRNA + L-cysteinyl-[cysteine desulfurase] + A + AMP + diphosphate + H(+)</text>
        <dbReference type="Rhea" id="RHEA:57048"/>
        <dbReference type="Rhea" id="RHEA-COMP:10288"/>
        <dbReference type="Rhea" id="RHEA-COMP:12157"/>
        <dbReference type="Rhea" id="RHEA-COMP:12158"/>
        <dbReference type="Rhea" id="RHEA-COMP:14821"/>
        <dbReference type="ChEBI" id="CHEBI:13193"/>
        <dbReference type="ChEBI" id="CHEBI:15378"/>
        <dbReference type="ChEBI" id="CHEBI:17499"/>
        <dbReference type="ChEBI" id="CHEBI:29950"/>
        <dbReference type="ChEBI" id="CHEBI:30616"/>
        <dbReference type="ChEBI" id="CHEBI:33019"/>
        <dbReference type="ChEBI" id="CHEBI:61963"/>
        <dbReference type="ChEBI" id="CHEBI:82748"/>
        <dbReference type="ChEBI" id="CHEBI:141453"/>
        <dbReference type="ChEBI" id="CHEBI:456215"/>
    </reaction>
    <physiologicalReaction direction="left-to-right" evidence="1">
        <dbReference type="Rhea" id="RHEA:57049"/>
    </physiologicalReaction>
</comment>
<comment type="cofactor">
    <cofactor evidence="1">
        <name>Mg(2+)</name>
        <dbReference type="ChEBI" id="CHEBI:18420"/>
    </cofactor>
</comment>
<comment type="cofactor">
    <cofactor evidence="1">
        <name>[4Fe-4S] cluster</name>
        <dbReference type="ChEBI" id="CHEBI:49883"/>
    </cofactor>
    <text evidence="1">Binds 1 [4Fe-4S] cluster per subunit. The cluster is chelated by three Cys residues, the fourth Fe has a free coordination site that may bind a sulfur atom transferred from the persulfide of IscS.</text>
</comment>
<comment type="pathway">
    <text evidence="1">tRNA modification.</text>
</comment>
<comment type="subunit">
    <text evidence="1">Homodimer.</text>
</comment>
<comment type="subcellular location">
    <subcellularLocation>
        <location evidence="1">Cytoplasm</location>
    </subcellularLocation>
</comment>
<comment type="miscellaneous">
    <text evidence="1">The thiolation reaction likely consists of two steps: a first activation step by ATP to form an adenylated intermediate of the target base of tRNA, and a second nucleophilic substitution step of the sulfur (S) atom supplied by the hydrosulfide attached to the Fe-S cluster.</text>
</comment>
<comment type="similarity">
    <text evidence="1">Belongs to the TtcA family.</text>
</comment>
<comment type="sequence caution" evidence="2">
    <conflict type="erroneous initiation">
        <sequence resource="EMBL-CDS" id="BAB47717"/>
    </conflict>
    <text>Truncated N-terminus.</text>
</comment>
<evidence type="ECO:0000255" key="1">
    <source>
        <dbReference type="HAMAP-Rule" id="MF_01850"/>
    </source>
</evidence>
<evidence type="ECO:0000305" key="2"/>
<protein>
    <recommendedName>
        <fullName evidence="1">tRNA-cytidine(32) 2-sulfurtransferase</fullName>
        <ecNumber evidence="1">2.8.1.-</ecNumber>
    </recommendedName>
    <alternativeName>
        <fullName evidence="1">Two-thiocytidine biosynthesis protein A</fullName>
    </alternativeName>
    <alternativeName>
        <fullName evidence="1">tRNA 2-thiocytidine biosynthesis protein TtcA</fullName>
    </alternativeName>
</protein>
<gene>
    <name evidence="1" type="primary">ttcA</name>
    <name type="ordered locus">mlr0047</name>
</gene>
<dbReference type="EC" id="2.8.1.-" evidence="1"/>
<dbReference type="EMBL" id="BA000012">
    <property type="protein sequence ID" value="BAB47717.1"/>
    <property type="status" value="ALT_INIT"/>
    <property type="molecule type" value="Genomic_DNA"/>
</dbReference>
<dbReference type="RefSeq" id="WP_032930041.1">
    <property type="nucleotide sequence ID" value="NC_002678.2"/>
</dbReference>
<dbReference type="SMR" id="Q98NP4"/>
<dbReference type="GeneID" id="66684406"/>
<dbReference type="KEGG" id="mlo:mlr0047"/>
<dbReference type="eggNOG" id="COG0037">
    <property type="taxonomic scope" value="Bacteria"/>
</dbReference>
<dbReference type="HOGENOM" id="CLU_026481_0_0_5"/>
<dbReference type="Proteomes" id="UP000000552">
    <property type="component" value="Chromosome"/>
</dbReference>
<dbReference type="GO" id="GO:0005737">
    <property type="term" value="C:cytoplasm"/>
    <property type="evidence" value="ECO:0007669"/>
    <property type="project" value="UniProtKB-SubCell"/>
</dbReference>
<dbReference type="GO" id="GO:0051539">
    <property type="term" value="F:4 iron, 4 sulfur cluster binding"/>
    <property type="evidence" value="ECO:0007669"/>
    <property type="project" value="UniProtKB-UniRule"/>
</dbReference>
<dbReference type="GO" id="GO:0005524">
    <property type="term" value="F:ATP binding"/>
    <property type="evidence" value="ECO:0007669"/>
    <property type="project" value="UniProtKB-UniRule"/>
</dbReference>
<dbReference type="GO" id="GO:0000287">
    <property type="term" value="F:magnesium ion binding"/>
    <property type="evidence" value="ECO:0007669"/>
    <property type="project" value="UniProtKB-UniRule"/>
</dbReference>
<dbReference type="GO" id="GO:0016783">
    <property type="term" value="F:sulfurtransferase activity"/>
    <property type="evidence" value="ECO:0007669"/>
    <property type="project" value="UniProtKB-UniRule"/>
</dbReference>
<dbReference type="GO" id="GO:0000049">
    <property type="term" value="F:tRNA binding"/>
    <property type="evidence" value="ECO:0007669"/>
    <property type="project" value="UniProtKB-KW"/>
</dbReference>
<dbReference type="GO" id="GO:0034227">
    <property type="term" value="P:tRNA thio-modification"/>
    <property type="evidence" value="ECO:0007669"/>
    <property type="project" value="UniProtKB-UniRule"/>
</dbReference>
<dbReference type="CDD" id="cd24138">
    <property type="entry name" value="TtcA-like"/>
    <property type="match status" value="1"/>
</dbReference>
<dbReference type="Gene3D" id="3.40.50.620">
    <property type="entry name" value="HUPs"/>
    <property type="match status" value="1"/>
</dbReference>
<dbReference type="HAMAP" id="MF_01850">
    <property type="entry name" value="TtcA"/>
    <property type="match status" value="1"/>
</dbReference>
<dbReference type="InterPro" id="IPR014729">
    <property type="entry name" value="Rossmann-like_a/b/a_fold"/>
</dbReference>
<dbReference type="InterPro" id="IPR011063">
    <property type="entry name" value="TilS/TtcA_N"/>
</dbReference>
<dbReference type="InterPro" id="IPR012089">
    <property type="entry name" value="tRNA_Cyd_32_2_STrfase"/>
</dbReference>
<dbReference type="InterPro" id="IPR035107">
    <property type="entry name" value="tRNA_thiolation_TtcA_Ctu1"/>
</dbReference>
<dbReference type="NCBIfam" id="NF007972">
    <property type="entry name" value="PRK10696.1"/>
    <property type="match status" value="1"/>
</dbReference>
<dbReference type="PANTHER" id="PTHR43686:SF1">
    <property type="entry name" value="AMINOTRAN_5 DOMAIN-CONTAINING PROTEIN"/>
    <property type="match status" value="1"/>
</dbReference>
<dbReference type="PANTHER" id="PTHR43686">
    <property type="entry name" value="SULFURTRANSFERASE-RELATED"/>
    <property type="match status" value="1"/>
</dbReference>
<dbReference type="Pfam" id="PF01171">
    <property type="entry name" value="ATP_bind_3"/>
    <property type="match status" value="1"/>
</dbReference>
<dbReference type="PIRSF" id="PIRSF004976">
    <property type="entry name" value="ATPase_YdaO"/>
    <property type="match status" value="1"/>
</dbReference>
<dbReference type="SUPFAM" id="SSF52402">
    <property type="entry name" value="Adenine nucleotide alpha hydrolases-like"/>
    <property type="match status" value="1"/>
</dbReference>
<sequence length="295" mass="33168">MNMLPDIETLETAAEGGSHPLFADVPSSVEFNKLRKRLLRLTRQAIEDFSMVEPGQRWLVALSGGKDSYGLLALLLDLKWRGLLPVELLACNLDQGQPNFPKHILPDYLNANGIAHRIEYQDTYSVVTNKLPEGSTYCSLCSRLRRGHLYRIAREEGCSALVLGHHREDILETFFMNLFHGGRLAAMPPKLLNDEGDVMVLRPLSYCAEIDLEKFAAAMRFPIIPCDLCGSQEGLQRNAMKAMLEDIEKRMPGRKDTMIRALSNTRPSHLLDRKLFDFAALNQTLITGQDASDDI</sequence>